<gene>
    <name evidence="5" type="primary">STS-09</name>
</gene>
<name>STS9_POSPM</name>
<keyword id="KW-0456">Lyase</keyword>
<keyword id="KW-0460">Magnesium</keyword>
<keyword id="KW-0479">Metal-binding</keyword>
<protein>
    <recommendedName>
        <fullName evidence="5">Sesquiterpene synthase 9</fullName>
        <ecNumber evidence="4">4.2.3.-</ecNumber>
    </recommendedName>
    <alternativeName>
        <fullName evidence="5">Terpene cyclase 9</fullName>
    </alternativeName>
</protein>
<sequence>MVRTRPTYIYLPDTAAGWPFPRTVNPYYEETKAESEAWISSLYPFDAYVQKKFNACDFTLLASMAYPWLSKDHIRTGADLMMLFFVFDEYSDVASVKDAQEMVDIVMDALRNPHKPRPKDENILGEIAKQFWERGVKTASAPSARRFVDYFEGYLKSVVEQAQDREHNRIRSIAEYFDVRRLTVGARPSYALMELGMNIPDEVWEDPAMEIMAVCVTDMIILDNDMLSWNVEQSRGDDAHNIVRIVMEANKTDVASAMKWVEDYHNLLKKTFLDVYNSVPSWGPEVDAQVQEYARGLGNWVICNISWSFESARYFGKEGRRIREERVVAILDKPVLVGVLESDA</sequence>
<proteinExistence type="evidence at protein level"/>
<evidence type="ECO:0000250" key="1">
    <source>
        <dbReference type="UniProtKB" id="B5HDJ6"/>
    </source>
</evidence>
<evidence type="ECO:0000250" key="2">
    <source>
        <dbReference type="UniProtKB" id="I3ZNU9"/>
    </source>
</evidence>
<evidence type="ECO:0000250" key="3">
    <source>
        <dbReference type="UniProtKB" id="Q9UR08"/>
    </source>
</evidence>
<evidence type="ECO:0000269" key="4">
    <source>
    </source>
</evidence>
<evidence type="ECO:0000303" key="5">
    <source>
    </source>
</evidence>
<evidence type="ECO:0000305" key="6"/>
<evidence type="ECO:0000305" key="7">
    <source>
    </source>
</evidence>
<feature type="chain" id="PRO_0000451391" description="Sesquiterpene synthase 9">
    <location>
        <begin position="1"/>
        <end position="344"/>
    </location>
</feature>
<feature type="short sequence motif" description="DDXXD motif" evidence="7">
    <location>
        <begin position="88"/>
        <end position="92"/>
    </location>
</feature>
<feature type="short sequence motif" description="NSE/DTE motif" evidence="7">
    <location>
        <begin position="224"/>
        <end position="232"/>
    </location>
</feature>
<feature type="binding site" evidence="3">
    <location>
        <position position="88"/>
    </location>
    <ligand>
        <name>Mg(2+)</name>
        <dbReference type="ChEBI" id="CHEBI:18420"/>
        <label>1</label>
    </ligand>
</feature>
<feature type="binding site" evidence="3">
    <location>
        <position position="88"/>
    </location>
    <ligand>
        <name>Mg(2+)</name>
        <dbReference type="ChEBI" id="CHEBI:18420"/>
        <label>2</label>
    </ligand>
</feature>
<feature type="binding site" evidence="3">
    <location>
        <position position="224"/>
    </location>
    <ligand>
        <name>Mg(2+)</name>
        <dbReference type="ChEBI" id="CHEBI:18420"/>
        <label>3</label>
    </ligand>
</feature>
<feature type="binding site" evidence="3">
    <location>
        <position position="228"/>
    </location>
    <ligand>
        <name>Mg(2+)</name>
        <dbReference type="ChEBI" id="CHEBI:18420"/>
        <label>3</label>
    </ligand>
</feature>
<feature type="binding site" evidence="3">
    <location>
        <position position="232"/>
    </location>
    <ligand>
        <name>Mg(2+)</name>
        <dbReference type="ChEBI" id="CHEBI:18420"/>
        <label>3</label>
    </ligand>
</feature>
<feature type="binding site" evidence="3">
    <location>
        <position position="313"/>
    </location>
    <ligand>
        <name>(2E,6E)-farnesyl diphosphate</name>
        <dbReference type="ChEBI" id="CHEBI:175763"/>
    </ligand>
</feature>
<feature type="binding site" evidence="3">
    <location>
        <position position="314"/>
    </location>
    <ligand>
        <name>(2E,6E)-farnesyl diphosphate</name>
        <dbReference type="ChEBI" id="CHEBI:175763"/>
    </ligand>
</feature>
<feature type="site" description="Plays a critical role in the stabilization of intermediate cation" evidence="1">
    <location>
        <position position="85"/>
    </location>
</feature>
<organism>
    <name type="scientific">Postia placenta (strain ATCC 44394 / Madison 698-R)</name>
    <name type="common">Brown rot fungus</name>
    <name type="synonym">Poria monticola</name>
    <dbReference type="NCBI Taxonomy" id="561896"/>
    <lineage>
        <taxon>Eukaryota</taxon>
        <taxon>Fungi</taxon>
        <taxon>Dikarya</taxon>
        <taxon>Basidiomycota</taxon>
        <taxon>Agaricomycotina</taxon>
        <taxon>Agaricomycetes</taxon>
        <taxon>Polyporales</taxon>
        <taxon>Adustoporiaceae</taxon>
        <taxon>Rhodonia</taxon>
    </lineage>
</organism>
<accession>A0A348B785</accession>
<dbReference type="EC" id="4.2.3.-" evidence="4"/>
<dbReference type="EMBL" id="LC378431">
    <property type="protein sequence ID" value="BBD74523.1"/>
    <property type="molecule type" value="mRNA"/>
</dbReference>
<dbReference type="SMR" id="A0A348B785"/>
<dbReference type="GO" id="GO:0046872">
    <property type="term" value="F:metal ion binding"/>
    <property type="evidence" value="ECO:0007669"/>
    <property type="project" value="UniProtKB-KW"/>
</dbReference>
<dbReference type="GO" id="GO:0010333">
    <property type="term" value="F:terpene synthase activity"/>
    <property type="evidence" value="ECO:0007669"/>
    <property type="project" value="InterPro"/>
</dbReference>
<dbReference type="GO" id="GO:0008299">
    <property type="term" value="P:isoprenoid biosynthetic process"/>
    <property type="evidence" value="ECO:0007669"/>
    <property type="project" value="UniProtKB-ARBA"/>
</dbReference>
<dbReference type="Gene3D" id="1.10.600.10">
    <property type="entry name" value="Farnesyl Diphosphate Synthase"/>
    <property type="match status" value="1"/>
</dbReference>
<dbReference type="InterPro" id="IPR008949">
    <property type="entry name" value="Isoprenoid_synthase_dom_sf"/>
</dbReference>
<dbReference type="InterPro" id="IPR034686">
    <property type="entry name" value="Terpene_cyclase-like_2"/>
</dbReference>
<dbReference type="PANTHER" id="PTHR35201:SF4">
    <property type="entry name" value="BETA-PINACENE SYNTHASE-RELATED"/>
    <property type="match status" value="1"/>
</dbReference>
<dbReference type="PANTHER" id="PTHR35201">
    <property type="entry name" value="TERPENE SYNTHASE"/>
    <property type="match status" value="1"/>
</dbReference>
<dbReference type="Pfam" id="PF19086">
    <property type="entry name" value="Terpene_syn_C_2"/>
    <property type="match status" value="1"/>
</dbReference>
<dbReference type="SFLD" id="SFLDS00005">
    <property type="entry name" value="Isoprenoid_Synthase_Type_I"/>
    <property type="match status" value="1"/>
</dbReference>
<dbReference type="SFLD" id="SFLDG01020">
    <property type="entry name" value="Terpene_Cyclase_Like_2"/>
    <property type="match status" value="1"/>
</dbReference>
<dbReference type="SUPFAM" id="SSF48576">
    <property type="entry name" value="Terpenoid synthases"/>
    <property type="match status" value="1"/>
</dbReference>
<comment type="function">
    <text evidence="4">Terpene cyclase that catalyzes the cyclization of farnesyl diphosphate (FPP) to a single major sesquiterpene scaffold whose chemical structure is still unknown.</text>
</comment>
<comment type="cofactor">
    <cofactor evidence="2">
        <name>Mg(2+)</name>
        <dbReference type="ChEBI" id="CHEBI:18420"/>
    </cofactor>
</comment>
<comment type="domain">
    <text evidence="7">The conserved DDXXD and NSE/DTE motifs are important for the catalytic activity, presumably through binding to Mg(2+).</text>
</comment>
<comment type="similarity">
    <text evidence="6">Belongs to the terpene synthase family.</text>
</comment>
<reference key="1">
    <citation type="journal article" date="2018" name="Microb. Biotechnol.">
        <title>Insight into metabolic diversity of the brown-rot basidiomycete Postia placenta responsible for sesquiterpene biosynthesis: semi-comprehensive screening of cytochrome P450 monooxygenase involved in protoilludene metabolism.</title>
        <authorList>
            <person name="Ichinose H."/>
            <person name="Kitaoka T."/>
        </authorList>
    </citation>
    <scope>NUCLEOTIDE SEQUENCE [MRNA]</scope>
    <scope>FUNCTION</scope>
    <scope>DOMAIN</scope>
    <scope>CATALYTIC ACTIVITY</scope>
    <source>
        <strain>ATCC 44394 / Madison 698-R</strain>
    </source>
</reference>